<sequence length="459" mass="50250">MGSKSPEDHRQGPDGGSADAAVTIINPPKSAAASGLLQGMLEGQDEDGDDDDDEKTGINVKTYDGAKKKRKRNKKKSKKVAVIQQTFPPRIPLATLFDNQPYPEGQIVDHVVKDDNIKRTTTEELRHVAALNDMDDDFLKDYRKAAEVHRQVRHHAQTIAKPGVSMTRLAEEIDEGVRALTGHTGLETGDALKAGLAFPTGLCLNHVGAHWTPNAGAKEVILKHDDVLKVDFGVHVNGRIVDSAFTVAANPVYDNLLAAVKAATNTGLGEAGIDARIDHISEAIQEVMESYEVELNGKTIPVKAVRNITGHNILRYRIHGDKQVPFVKTKTDQRMEEGDIFAIETFGSTGKAHLRDDVGVYGYGRNENMSPAVLHQSSAKSLLKTIDANFGTLVFARRQLERLPGVEKYHLGMRTLVNSGLVESYAPLVDITGSYIAQFEHTVLLRPNCKEIISRGDDY</sequence>
<protein>
    <recommendedName>
        <fullName evidence="1">Methionine aminopeptidase 2-1</fullName>
        <shortName evidence="1">MAP 2-1</shortName>
        <shortName evidence="1">MetAP 2-1</shortName>
        <ecNumber evidence="1">3.4.11.18</ecNumber>
    </recommendedName>
    <alternativeName>
        <fullName evidence="1">Peptidase M</fullName>
    </alternativeName>
</protein>
<name>MAP21_PYRTR</name>
<proteinExistence type="inferred from homology"/>
<organism>
    <name type="scientific">Pyrenophora tritici-repentis (strain Pt-1C-BFP)</name>
    <name type="common">Wheat tan spot fungus</name>
    <name type="synonym">Drechslera tritici-repentis</name>
    <dbReference type="NCBI Taxonomy" id="426418"/>
    <lineage>
        <taxon>Eukaryota</taxon>
        <taxon>Fungi</taxon>
        <taxon>Dikarya</taxon>
        <taxon>Ascomycota</taxon>
        <taxon>Pezizomycotina</taxon>
        <taxon>Dothideomycetes</taxon>
        <taxon>Pleosporomycetidae</taxon>
        <taxon>Pleosporales</taxon>
        <taxon>Pleosporineae</taxon>
        <taxon>Pleosporaceae</taxon>
        <taxon>Pyrenophora</taxon>
    </lineage>
</organism>
<comment type="function">
    <text evidence="1">Cotranslationally removes the N-terminal methionine from nascent proteins. The N-terminal methionine is often cleaved when the second residue in the primary sequence is small and uncharged (Met-Ala-, Cys, Gly, Pro, Ser, Thr, or Val).</text>
</comment>
<comment type="catalytic activity">
    <reaction evidence="1">
        <text>Release of N-terminal amino acids, preferentially methionine, from peptides and arylamides.</text>
        <dbReference type="EC" id="3.4.11.18"/>
    </reaction>
</comment>
<comment type="cofactor">
    <cofactor evidence="1">
        <name>Co(2+)</name>
        <dbReference type="ChEBI" id="CHEBI:48828"/>
    </cofactor>
    <cofactor evidence="1">
        <name>Zn(2+)</name>
        <dbReference type="ChEBI" id="CHEBI:29105"/>
    </cofactor>
    <cofactor evidence="1">
        <name>Mn(2+)</name>
        <dbReference type="ChEBI" id="CHEBI:29035"/>
    </cofactor>
    <cofactor evidence="1">
        <name>Fe(2+)</name>
        <dbReference type="ChEBI" id="CHEBI:29033"/>
    </cofactor>
    <text evidence="1">Binds 2 divalent metal cations per subunit. Has a high-affinity and a low affinity metal-binding site. The true nature of the physiological cofactor is under debate. The enzyme is active with cobalt, zinc, manganese or divalent iron ions. Most likely, methionine aminopeptidases function as mononuclear Fe(2+)-metalloproteases under physiological conditions, and the catalytically relevant metal-binding site has been assigned to the histidine-containing high-affinity site.</text>
</comment>
<comment type="subcellular location">
    <subcellularLocation>
        <location evidence="1">Cytoplasm</location>
    </subcellularLocation>
</comment>
<comment type="similarity">
    <text evidence="1">Belongs to the peptidase M24A family. Methionine aminopeptidase eukaryotic type 2 subfamily.</text>
</comment>
<reference key="1">
    <citation type="journal article" date="2013" name="G3 (Bethesda)">
        <title>Comparative genomics of a plant-pathogenic fungus, Pyrenophora tritici-repentis, reveals transduplication and the impact of repeat elements on pathogenicity and population divergence.</title>
        <authorList>
            <person name="Manning V.A."/>
            <person name="Pandelova I."/>
            <person name="Dhillon B."/>
            <person name="Wilhelm L.J."/>
            <person name="Goodwin S.B."/>
            <person name="Berlin A.M."/>
            <person name="Figueroa M."/>
            <person name="Freitag M."/>
            <person name="Hane J.K."/>
            <person name="Henrissat B."/>
            <person name="Holman W.H."/>
            <person name="Kodira C.D."/>
            <person name="Martin J."/>
            <person name="Oliver R.P."/>
            <person name="Robbertse B."/>
            <person name="Schackwitz W."/>
            <person name="Schwartz D.C."/>
            <person name="Spatafora J.W."/>
            <person name="Turgeon B.G."/>
            <person name="Yandava C."/>
            <person name="Young S."/>
            <person name="Zhou S."/>
            <person name="Zeng Q."/>
            <person name="Grigoriev I.V."/>
            <person name="Ma L.-J."/>
            <person name="Ciuffetti L.M."/>
        </authorList>
    </citation>
    <scope>NUCLEOTIDE SEQUENCE [LARGE SCALE GENOMIC DNA]</scope>
    <source>
        <strain>Pt-1C-BFP</strain>
    </source>
</reference>
<feature type="chain" id="PRO_0000407634" description="Methionine aminopeptidase 2-1">
    <location>
        <begin position="1"/>
        <end position="459"/>
    </location>
</feature>
<feature type="region of interest" description="Disordered" evidence="2">
    <location>
        <begin position="1"/>
        <end position="79"/>
    </location>
</feature>
<feature type="compositionally biased region" description="Basic and acidic residues" evidence="2">
    <location>
        <begin position="1"/>
        <end position="12"/>
    </location>
</feature>
<feature type="compositionally biased region" description="Acidic residues" evidence="2">
    <location>
        <begin position="43"/>
        <end position="54"/>
    </location>
</feature>
<feature type="compositionally biased region" description="Basic residues" evidence="2">
    <location>
        <begin position="67"/>
        <end position="79"/>
    </location>
</feature>
<feature type="binding site" evidence="1">
    <location>
        <position position="210"/>
    </location>
    <ligand>
        <name>substrate</name>
    </ligand>
</feature>
<feature type="binding site" evidence="1">
    <location>
        <position position="231"/>
    </location>
    <ligand>
        <name>a divalent metal cation</name>
        <dbReference type="ChEBI" id="CHEBI:60240"/>
        <label>1</label>
    </ligand>
</feature>
<feature type="binding site" evidence="1">
    <location>
        <position position="242"/>
    </location>
    <ligand>
        <name>a divalent metal cation</name>
        <dbReference type="ChEBI" id="CHEBI:60240"/>
        <label>1</label>
    </ligand>
</feature>
<feature type="binding site" evidence="1">
    <location>
        <position position="242"/>
    </location>
    <ligand>
        <name>a divalent metal cation</name>
        <dbReference type="ChEBI" id="CHEBI:60240"/>
        <label>2</label>
        <note>catalytic</note>
    </ligand>
</feature>
<feature type="binding site" evidence="1">
    <location>
        <position position="311"/>
    </location>
    <ligand>
        <name>a divalent metal cation</name>
        <dbReference type="ChEBI" id="CHEBI:60240"/>
        <label>2</label>
        <note>catalytic</note>
    </ligand>
</feature>
<feature type="binding site" evidence="1">
    <location>
        <position position="319"/>
    </location>
    <ligand>
        <name>substrate</name>
    </ligand>
</feature>
<feature type="binding site" evidence="1">
    <location>
        <position position="344"/>
    </location>
    <ligand>
        <name>a divalent metal cation</name>
        <dbReference type="ChEBI" id="CHEBI:60240"/>
        <label>2</label>
        <note>catalytic</note>
    </ligand>
</feature>
<feature type="binding site" evidence="1">
    <location>
        <position position="440"/>
    </location>
    <ligand>
        <name>a divalent metal cation</name>
        <dbReference type="ChEBI" id="CHEBI:60240"/>
        <label>1</label>
    </ligand>
</feature>
<feature type="binding site" evidence="1">
    <location>
        <position position="440"/>
    </location>
    <ligand>
        <name>a divalent metal cation</name>
        <dbReference type="ChEBI" id="CHEBI:60240"/>
        <label>2</label>
        <note>catalytic</note>
    </ligand>
</feature>
<keyword id="KW-0031">Aminopeptidase</keyword>
<keyword id="KW-0963">Cytoplasm</keyword>
<keyword id="KW-0378">Hydrolase</keyword>
<keyword id="KW-0479">Metal-binding</keyword>
<keyword id="KW-0645">Protease</keyword>
<keyword id="KW-1185">Reference proteome</keyword>
<gene>
    <name type="ORF">PTRG_01376</name>
</gene>
<evidence type="ECO:0000255" key="1">
    <source>
        <dbReference type="HAMAP-Rule" id="MF_03175"/>
    </source>
</evidence>
<evidence type="ECO:0000256" key="2">
    <source>
        <dbReference type="SAM" id="MobiDB-lite"/>
    </source>
</evidence>
<accession>B2VW14</accession>
<dbReference type="EC" id="3.4.11.18" evidence="1"/>
<dbReference type="EMBL" id="DS231615">
    <property type="protein sequence ID" value="EDU40814.1"/>
    <property type="molecule type" value="Genomic_DNA"/>
</dbReference>
<dbReference type="RefSeq" id="XP_001931709.1">
    <property type="nucleotide sequence ID" value="XM_001931674.1"/>
</dbReference>
<dbReference type="SMR" id="B2VW14"/>
<dbReference type="STRING" id="426418.B2VW14"/>
<dbReference type="EnsemblFungi" id="EDU40814">
    <property type="protein sequence ID" value="EDU40814"/>
    <property type="gene ID" value="PTRG_01376"/>
</dbReference>
<dbReference type="GeneID" id="6338328"/>
<dbReference type="KEGG" id="ptrr:6338328"/>
<dbReference type="eggNOG" id="KOG2775">
    <property type="taxonomic scope" value="Eukaryota"/>
</dbReference>
<dbReference type="HOGENOM" id="CLU_015857_7_1_1"/>
<dbReference type="InParanoid" id="B2VW14"/>
<dbReference type="OMA" id="ILRYHIH"/>
<dbReference type="OrthoDB" id="29559at28556"/>
<dbReference type="Proteomes" id="UP000001471">
    <property type="component" value="Unassembled WGS sequence"/>
</dbReference>
<dbReference type="GO" id="GO:0005737">
    <property type="term" value="C:cytoplasm"/>
    <property type="evidence" value="ECO:0007669"/>
    <property type="project" value="UniProtKB-SubCell"/>
</dbReference>
<dbReference type="GO" id="GO:0004239">
    <property type="term" value="F:initiator methionyl aminopeptidase activity"/>
    <property type="evidence" value="ECO:0007669"/>
    <property type="project" value="UniProtKB-UniRule"/>
</dbReference>
<dbReference type="GO" id="GO:0046872">
    <property type="term" value="F:metal ion binding"/>
    <property type="evidence" value="ECO:0007669"/>
    <property type="project" value="UniProtKB-UniRule"/>
</dbReference>
<dbReference type="GO" id="GO:0070006">
    <property type="term" value="F:metalloaminopeptidase activity"/>
    <property type="evidence" value="ECO:0007669"/>
    <property type="project" value="UniProtKB-UniRule"/>
</dbReference>
<dbReference type="GO" id="GO:0006508">
    <property type="term" value="P:proteolysis"/>
    <property type="evidence" value="ECO:0007669"/>
    <property type="project" value="UniProtKB-KW"/>
</dbReference>
<dbReference type="CDD" id="cd01088">
    <property type="entry name" value="MetAP2"/>
    <property type="match status" value="1"/>
</dbReference>
<dbReference type="Gene3D" id="3.90.230.10">
    <property type="entry name" value="Creatinase/methionine aminopeptidase superfamily"/>
    <property type="match status" value="1"/>
</dbReference>
<dbReference type="Gene3D" id="1.10.10.10">
    <property type="entry name" value="Winged helix-like DNA-binding domain superfamily/Winged helix DNA-binding domain"/>
    <property type="match status" value="1"/>
</dbReference>
<dbReference type="HAMAP" id="MF_03175">
    <property type="entry name" value="MetAP_2_euk"/>
    <property type="match status" value="1"/>
</dbReference>
<dbReference type="InterPro" id="IPR036005">
    <property type="entry name" value="Creatinase/aminopeptidase-like"/>
</dbReference>
<dbReference type="InterPro" id="IPR050247">
    <property type="entry name" value="Met_Aminopeptidase_Type2"/>
</dbReference>
<dbReference type="InterPro" id="IPR000994">
    <property type="entry name" value="Pept_M24"/>
</dbReference>
<dbReference type="InterPro" id="IPR001714">
    <property type="entry name" value="Pept_M24_MAP"/>
</dbReference>
<dbReference type="InterPro" id="IPR002468">
    <property type="entry name" value="Pept_M24A_MAP2"/>
</dbReference>
<dbReference type="InterPro" id="IPR018349">
    <property type="entry name" value="Pept_M24A_MAP2_BS"/>
</dbReference>
<dbReference type="InterPro" id="IPR036388">
    <property type="entry name" value="WH-like_DNA-bd_sf"/>
</dbReference>
<dbReference type="InterPro" id="IPR036390">
    <property type="entry name" value="WH_DNA-bd_sf"/>
</dbReference>
<dbReference type="NCBIfam" id="TIGR00501">
    <property type="entry name" value="met_pdase_II"/>
    <property type="match status" value="1"/>
</dbReference>
<dbReference type="PANTHER" id="PTHR45777">
    <property type="entry name" value="METHIONINE AMINOPEPTIDASE 2"/>
    <property type="match status" value="1"/>
</dbReference>
<dbReference type="PANTHER" id="PTHR45777:SF1">
    <property type="entry name" value="METHIONINE AMINOPEPTIDASE 2-2"/>
    <property type="match status" value="1"/>
</dbReference>
<dbReference type="Pfam" id="PF00557">
    <property type="entry name" value="Peptidase_M24"/>
    <property type="match status" value="1"/>
</dbReference>
<dbReference type="PRINTS" id="PR00599">
    <property type="entry name" value="MAPEPTIDASE"/>
</dbReference>
<dbReference type="SUPFAM" id="SSF55920">
    <property type="entry name" value="Creatinase/aminopeptidase"/>
    <property type="match status" value="1"/>
</dbReference>
<dbReference type="SUPFAM" id="SSF46785">
    <property type="entry name" value="Winged helix' DNA-binding domain"/>
    <property type="match status" value="1"/>
</dbReference>
<dbReference type="PROSITE" id="PS01202">
    <property type="entry name" value="MAP_2"/>
    <property type="match status" value="1"/>
</dbReference>